<reference key="1">
    <citation type="journal article" date="1992" name="J. Gen. Virol.">
        <title>Envelope protein sequences of dengue virus isolates TH-36 and TH-Sman, and identification of a type-specific genetic marker for dengue and tick-borne flaviviruses.</title>
        <authorList>
            <person name="Shiu S.Y.W."/>
            <person name="Jiang W.R."/>
            <person name="Porterfield J.S."/>
            <person name="Gould E.A."/>
        </authorList>
    </citation>
    <scope>NUCLEOTIDE SEQUENCE [GENOMIC RNA]</scope>
</reference>
<reference key="2">
    <citation type="journal article" date="2010" name="PLoS Pathog.">
        <title>Dengue virus ensures its fusion in late endosomes using compartment-specific lipids.</title>
        <authorList>
            <person name="Zaitseva E."/>
            <person name="Yang S.T."/>
            <person name="Melikov K."/>
            <person name="Pourmal S."/>
            <person name="Chernomordik L.V."/>
        </authorList>
    </citation>
    <scope>FUNCTION (ENVELOPE PROTEIN E)</scope>
</reference>
<name>POLG_DEN2H</name>
<organism>
    <name type="scientific">Dengue virus type 2 (strain Thailand/TH-36/1958)</name>
    <name type="common">DENV-2</name>
    <dbReference type="NCBI Taxonomy" id="31637"/>
    <lineage>
        <taxon>Viruses</taxon>
        <taxon>Riboviria</taxon>
        <taxon>Orthornavirae</taxon>
        <taxon>Kitrinoviricota</taxon>
        <taxon>Flasuviricetes</taxon>
        <taxon>Amarillovirales</taxon>
        <taxon>Flaviviridae</taxon>
        <taxon>Orthoflavivirus</taxon>
        <taxon>Orthoflavivirus denguei</taxon>
        <taxon>Dengue virus</taxon>
    </lineage>
</organism>
<keyword id="KW-1165">Clathrin-mediated endocytosis of virus by host</keyword>
<keyword id="KW-0165">Cleavage on pair of basic residues</keyword>
<keyword id="KW-1015">Disulfide bond</keyword>
<keyword id="KW-1170">Fusion of virus membrane with host endosomal membrane</keyword>
<keyword id="KW-1168">Fusion of virus membrane with host membrane</keyword>
<keyword id="KW-0325">Glycoprotein</keyword>
<keyword id="KW-1038">Host endoplasmic reticulum</keyword>
<keyword id="KW-1043">Host membrane</keyword>
<keyword id="KW-0945">Host-virus interaction</keyword>
<keyword id="KW-1090">Inhibition of host innate immune response by virus</keyword>
<keyword id="KW-0472">Membrane</keyword>
<keyword id="KW-0964">Secreted</keyword>
<keyword id="KW-0941">Suppressor of RNA silencing</keyword>
<keyword id="KW-0812">Transmembrane</keyword>
<keyword id="KW-1133">Transmembrane helix</keyword>
<keyword id="KW-1161">Viral attachment to host cell</keyword>
<keyword id="KW-0261">Viral envelope protein</keyword>
<keyword id="KW-0899">Viral immunoevasion</keyword>
<keyword id="KW-0543">Viral nucleoprotein</keyword>
<keyword id="KW-1162">Viral penetration into host cytoplasm</keyword>
<keyword id="KW-0946">Virion</keyword>
<keyword id="KW-1164">Virus endocytosis by host</keyword>
<keyword id="KW-1160">Virus entry into host cell</keyword>
<keyword id="KW-0862">Zinc</keyword>
<organismHost>
    <name type="scientific">Aedimorphus</name>
    <dbReference type="NCBI Taxonomy" id="53540"/>
</organismHost>
<organismHost>
    <name type="scientific">Diceromyia</name>
    <dbReference type="NCBI Taxonomy" id="53539"/>
</organismHost>
<organismHost>
    <name type="scientific">Erythrocebus patas</name>
    <name type="common">Red guenon</name>
    <name type="synonym">Cercopithecus patas</name>
    <dbReference type="NCBI Taxonomy" id="9538"/>
</organismHost>
<organismHost>
    <name type="scientific">Homo sapiens</name>
    <name type="common">Human</name>
    <dbReference type="NCBI Taxonomy" id="9606"/>
</organismHost>
<organismHost>
    <name type="scientific">Stegomyia</name>
    <dbReference type="NCBI Taxonomy" id="53541"/>
</organismHost>
<evidence type="ECO:0000250" key="1"/>
<evidence type="ECO:0000250" key="2">
    <source>
        <dbReference type="UniProtKB" id="P14336"/>
    </source>
</evidence>
<evidence type="ECO:0000250" key="3">
    <source>
        <dbReference type="UniProtKB" id="P17763"/>
    </source>
</evidence>
<evidence type="ECO:0000250" key="4">
    <source>
        <dbReference type="UniProtKB" id="P29990"/>
    </source>
</evidence>
<evidence type="ECO:0000250" key="5">
    <source>
        <dbReference type="UniProtKB" id="Q9Q6P4"/>
    </source>
</evidence>
<evidence type="ECO:0000255" key="6"/>
<sequence length="555" mass="61243">KHAQRIETWILRHPGFTIMAAILAYTIGTTHFQRALIFILLTAVAPSMTMRCIGISNRDFVEGVSGGSWVDIVLEHGSCVTTMAKNKPTLDFELIKTEAKQPVTLRKYCIEAKLTNTTTESRCPIQGEPSLNEEQDKRFVCKHSMVDRGWGNGCGLFGKGGIVTCAMFTCKKNMKGKVVQPENLEYTIVITPHSGEEHAVGNDTGKHGKEIKITPQSSITEAELTGYGTVTMECSPRTGLDFNEMVLLQMENKAWLVHRQWFLDLPLPWLPGADTQGSNWIQKETLVTFKNPHAKKQDVVVLGSQEGAMHTALTGATEIQMSSGNLLFTGHLKCRLRMDKLQLKGMSYSMCTGKFKVVKEIAETQHGTIVIRVQYEGDGSPCKIPFEIMDLEKRHVLGRLITVNPIVTEKDSPVNIEAEPPFGDSYIIIGVEPEQLKLNWFKKGSSIGQMFETTMRGAKRMAILGDTAWDFGSLGGVFTSIGKALHQVFGAIYGAAFSGVSWTMKILIGVIITWIGMNSRSTSLSVSLVLVGIVTLYLEVMVQADSGCVVSWKNK</sequence>
<accession>P29984</accession>
<protein>
    <recommendedName>
        <fullName>Genome polyprotein</fullName>
    </recommendedName>
    <component>
        <recommendedName>
            <fullName>Small envelope protein M</fullName>
        </recommendedName>
        <alternativeName>
            <fullName>Matrix protein</fullName>
        </alternativeName>
    </component>
    <component>
        <recommendedName>
            <fullName>Envelope protein E</fullName>
        </recommendedName>
    </component>
    <component>
        <recommendedName>
            <fullName>Non-structural protein 1</fullName>
            <shortName>NS1</shortName>
        </recommendedName>
    </component>
</protein>
<dbReference type="EMBL" id="D10514">
    <property type="protein sequence ID" value="BAA01389.1"/>
    <property type="molecule type" value="Genomic_RNA"/>
</dbReference>
<dbReference type="PIR" id="JQ1404">
    <property type="entry name" value="JQ1404"/>
</dbReference>
<dbReference type="SMR" id="P29984"/>
<dbReference type="GO" id="GO:0005576">
    <property type="term" value="C:extracellular region"/>
    <property type="evidence" value="ECO:0007669"/>
    <property type="project" value="UniProtKB-SubCell"/>
</dbReference>
<dbReference type="GO" id="GO:0044167">
    <property type="term" value="C:host cell endoplasmic reticulum membrane"/>
    <property type="evidence" value="ECO:0007669"/>
    <property type="project" value="UniProtKB-SubCell"/>
</dbReference>
<dbReference type="GO" id="GO:0016020">
    <property type="term" value="C:membrane"/>
    <property type="evidence" value="ECO:0007669"/>
    <property type="project" value="UniProtKB-KW"/>
</dbReference>
<dbReference type="GO" id="GO:0019031">
    <property type="term" value="C:viral envelope"/>
    <property type="evidence" value="ECO:0007669"/>
    <property type="project" value="UniProtKB-KW"/>
</dbReference>
<dbReference type="GO" id="GO:0019013">
    <property type="term" value="C:viral nucleocapsid"/>
    <property type="evidence" value="ECO:0007669"/>
    <property type="project" value="UniProtKB-KW"/>
</dbReference>
<dbReference type="GO" id="GO:0055036">
    <property type="term" value="C:virion membrane"/>
    <property type="evidence" value="ECO:0007669"/>
    <property type="project" value="UniProtKB-SubCell"/>
</dbReference>
<dbReference type="GO" id="GO:0046983">
    <property type="term" value="F:protein dimerization activity"/>
    <property type="evidence" value="ECO:0007669"/>
    <property type="project" value="InterPro"/>
</dbReference>
<dbReference type="GO" id="GO:0075512">
    <property type="term" value="P:clathrin-dependent endocytosis of virus by host cell"/>
    <property type="evidence" value="ECO:0007669"/>
    <property type="project" value="UniProtKB-KW"/>
</dbReference>
<dbReference type="GO" id="GO:0039654">
    <property type="term" value="P:fusion of virus membrane with host endosome membrane"/>
    <property type="evidence" value="ECO:0007669"/>
    <property type="project" value="UniProtKB-KW"/>
</dbReference>
<dbReference type="GO" id="GO:0052170">
    <property type="term" value="P:symbiont-mediated suppression of host innate immune response"/>
    <property type="evidence" value="ECO:0007669"/>
    <property type="project" value="UniProtKB-KW"/>
</dbReference>
<dbReference type="GO" id="GO:0019062">
    <property type="term" value="P:virion attachment to host cell"/>
    <property type="evidence" value="ECO:0007669"/>
    <property type="project" value="UniProtKB-KW"/>
</dbReference>
<dbReference type="CDD" id="cd12149">
    <property type="entry name" value="Flavi_E_C"/>
    <property type="match status" value="1"/>
</dbReference>
<dbReference type="FunFam" id="1.20.1280.260:FF:000001">
    <property type="entry name" value="Envelope glycoprotein"/>
    <property type="match status" value="1"/>
</dbReference>
<dbReference type="FunFam" id="2.60.40.350:FF:000001">
    <property type="entry name" value="Envelope glycoprotein"/>
    <property type="match status" value="1"/>
</dbReference>
<dbReference type="Gene3D" id="1.20.1280.260">
    <property type="match status" value="1"/>
</dbReference>
<dbReference type="Gene3D" id="2.60.40.350">
    <property type="match status" value="1"/>
</dbReference>
<dbReference type="Gene3D" id="1.10.8.970">
    <property type="entry name" value="Flavivirus envelope glycoprotein M-like"/>
    <property type="match status" value="1"/>
</dbReference>
<dbReference type="Gene3D" id="2.60.98.10">
    <property type="entry name" value="Tick-borne Encephalitis virus Glycoprotein, domain 1"/>
    <property type="match status" value="1"/>
</dbReference>
<dbReference type="Gene3D" id="3.30.67.10">
    <property type="entry name" value="Viral Envelope Glycoprotein, domain 2"/>
    <property type="match status" value="1"/>
</dbReference>
<dbReference type="Gene3D" id="3.30.387.10">
    <property type="entry name" value="Viral Envelope Glycoprotein, domain 3"/>
    <property type="match status" value="1"/>
</dbReference>
<dbReference type="InterPro" id="IPR000069">
    <property type="entry name" value="Env_glycoprot_M_flavivir"/>
</dbReference>
<dbReference type="InterPro" id="IPR038302">
    <property type="entry name" value="Env_glycoprot_M_sf_flavivir"/>
</dbReference>
<dbReference type="InterPro" id="IPR013755">
    <property type="entry name" value="Flav_gly_cen_dom_subdom1"/>
</dbReference>
<dbReference type="InterPro" id="IPR027287">
    <property type="entry name" value="Flavi_E_Ig-like"/>
</dbReference>
<dbReference type="InterPro" id="IPR026470">
    <property type="entry name" value="Flavi_E_Stem/Anchor_dom"/>
</dbReference>
<dbReference type="InterPro" id="IPR038345">
    <property type="entry name" value="Flavi_E_Stem/Anchor_dom_sf"/>
</dbReference>
<dbReference type="InterPro" id="IPR011998">
    <property type="entry name" value="Flavi_Glycoprot_E_cen/dimer"/>
</dbReference>
<dbReference type="InterPro" id="IPR000336">
    <property type="entry name" value="Flavivir/Alphavir_Ig-like_sf"/>
</dbReference>
<dbReference type="InterPro" id="IPR036253">
    <property type="entry name" value="Glycoprot_cen/dimer_sf"/>
</dbReference>
<dbReference type="InterPro" id="IPR038055">
    <property type="entry name" value="Glycoprot_E_dimer_dom"/>
</dbReference>
<dbReference type="InterPro" id="IPR013756">
    <property type="entry name" value="GlyE_cen_dom_subdom2"/>
</dbReference>
<dbReference type="InterPro" id="IPR014756">
    <property type="entry name" value="Ig_E-set"/>
</dbReference>
<dbReference type="NCBIfam" id="TIGR04240">
    <property type="entry name" value="flavi_E_stem"/>
    <property type="match status" value="1"/>
</dbReference>
<dbReference type="Pfam" id="PF21659">
    <property type="entry name" value="Flavi_E_stem"/>
    <property type="match status" value="1"/>
</dbReference>
<dbReference type="Pfam" id="PF02832">
    <property type="entry name" value="Flavi_glycop_C"/>
    <property type="match status" value="1"/>
</dbReference>
<dbReference type="Pfam" id="PF00869">
    <property type="entry name" value="Flavi_glycoprot"/>
    <property type="match status" value="1"/>
</dbReference>
<dbReference type="Pfam" id="PF01004">
    <property type="entry name" value="Flavi_M"/>
    <property type="match status" value="1"/>
</dbReference>
<dbReference type="SUPFAM" id="SSF81296">
    <property type="entry name" value="E set domains"/>
    <property type="match status" value="1"/>
</dbReference>
<dbReference type="SUPFAM" id="SSF56983">
    <property type="entry name" value="Viral glycoprotein, central and dimerisation domains"/>
    <property type="match status" value="1"/>
</dbReference>
<comment type="function">
    <molecule>Small envelope protein M</molecule>
    <text evidence="3">May play a role in virus budding. Exerts cytotoxic effects by activating a mitochondrial apoptotic pathway through M ectodomain. May display a viroporin activity.</text>
</comment>
<comment type="function">
    <molecule>Envelope protein E</molecule>
    <text evidence="3">Binds to host cell surface receptor and mediates fusion between viral and cellular membranes (PubMed:20949067). Envelope protein is synthesized in the endoplasmic reticulum in the form of heterodimer with protein prM (By similarity). They play a role in virion budding in the ER, and the newly formed immature particle is covered with 60 spikes composed of heterodimer between precursor prM and envelope protein E (By similarity). The virion is transported to the Golgi apparatus where the low pH causes dissociation of PrM-E heterodimers and formation of E homodimers (By similarity). prM-E cleavage is inefficient, and many virions are only partially matured (By similarity). These uncleaved prM would play a role in immune evasion (By similarity).</text>
</comment>
<comment type="function">
    <molecule>Non-structural protein 1</molecule>
    <text evidence="5">Involved in immune evasion, pathogenesis and viral replication. Once cleaved off the polyprotein, is targeted to three destinations: the viral replication cycle, the plasma membrane and the extracellular compartment. Essential for viral replication. Required for formation of the replication complex and recruitment of other non-structural proteins to the ER-derived membrane structures. Excreted as a hexameric lipoparticle that plays a role against host immune response. Antagonizing the complement function. Binds to the host macrophages and dendritic cells. Inhibits signal transduction originating from Toll-like receptor 3 (TLR3).</text>
</comment>
<comment type="function">
    <molecule>Non-structural protein 1</molecule>
    <text evidence="3">Disrupts the host endothelial glycocalyx layer of host pulmonary microvascular endothelial cells, inducing degradation of sialic acid and shedding of heparan sulfate proteoglycans. NS1 induces expression of sialidases, heparanase, and activates cathepsin L, which activates heparanase via enzymatic cleavage. These effects are probably linked to the endothelial hyperpermeability observed in severe dengue disease.</text>
</comment>
<comment type="subunit">
    <molecule>Envelope protein E</molecule>
    <text evidence="3">Homodimer; in the endoplasmic reticulum and Golgi. Interacts with protein prM. Interacts with non-structural protein 1.</text>
</comment>
<comment type="subunit">
    <molecule>Non-structural protein 1</molecule>
    <text evidence="3">Homodimer; Homohexamer when secreted. Interacts with envelope protein E.</text>
</comment>
<comment type="subcellular location">
    <molecule>Small envelope protein M</molecule>
    <subcellularLocation>
        <location evidence="3">Virion membrane</location>
        <topology evidence="6">Multi-pass membrane protein</topology>
    </subcellularLocation>
    <subcellularLocation>
        <location evidence="3">Host endoplasmic reticulum membrane</location>
        <topology evidence="6">Multi-pass membrane protein</topology>
    </subcellularLocation>
</comment>
<comment type="subcellular location">
    <molecule>Envelope protein E</molecule>
    <subcellularLocation>
        <location evidence="3">Virion membrane</location>
        <topology evidence="6">Multi-pass membrane protein</topology>
    </subcellularLocation>
    <subcellularLocation>
        <location evidence="3">Host endoplasmic reticulum membrane</location>
        <topology evidence="6">Multi-pass membrane protein</topology>
    </subcellularLocation>
</comment>
<comment type="subcellular location">
    <molecule>Non-structural protein 1</molecule>
    <subcellularLocation>
        <location evidence="3">Secreted</location>
    </subcellularLocation>
    <subcellularLocation>
        <location>Host endoplasmic reticulum membrane</location>
        <topology>Peripheral membrane protein</topology>
        <orientation evidence="3">Lumenal side</orientation>
    </subcellularLocation>
    <text evidence="5">Located in RE-derived vesicles hosting the replication complex.</text>
</comment>
<comment type="domain">
    <text evidence="3">The transmembrane domains of the small envelope protein M and envelope protein E contain an endoplasmic reticulum retention signal.</text>
</comment>
<comment type="PTM">
    <molecule>Envelope protein E</molecule>
    <text evidence="3">N-glycosylated.</text>
</comment>
<comment type="PTM">
    <molecule>Non-structural protein 1</molecule>
    <text evidence="3">N-glycosylated. The excreted form is glycosylated and this is required for efficient secretion of the protein from infected cells.</text>
</comment>
<comment type="PTM">
    <molecule>Genome polyprotein</molecule>
    <text evidence="3">Specific enzymatic cleavages in vivo yield mature proteins. Cleavages in the lumen of endoplasmic reticulum are performed by host signal peptidase, wereas cleavages in the cytoplasmic side are performed by serine protease NS3. Signal cleavage at the 2K-4B site requires a prior NS3 protease-mediated cleavage at the 4A-2K site.</text>
</comment>
<proteinExistence type="inferred from homology"/>
<feature type="chain" id="PRO_0000405212" description="Genome polyprotein">
    <location>
        <begin position="1" status="less than"/>
        <end position="555" status="greater than"/>
    </location>
</feature>
<feature type="chain" id="PRO_0000037922" description="Small envelope protein M" evidence="1">
    <location>
        <begin position="1" status="less than"/>
        <end position="49"/>
    </location>
</feature>
<feature type="chain" id="PRO_0000037923" description="Envelope protein E" evidence="4">
    <location>
        <begin position="50"/>
        <end position="544"/>
    </location>
</feature>
<feature type="chain" id="PRO_0000037924" description="Non-structural protein 1" evidence="4">
    <location>
        <begin position="545"/>
        <end position="555" status="greater than"/>
    </location>
</feature>
<feature type="topological domain" description="Extracellular" evidence="6">
    <location>
        <begin position="1" status="less than"/>
        <end position="7"/>
    </location>
</feature>
<feature type="transmembrane region" description="Helical" evidence="6">
    <location>
        <begin position="8"/>
        <end position="28"/>
    </location>
</feature>
<feature type="topological domain" description="Cytoplasmic" evidence="6">
    <location>
        <begin position="29"/>
        <end position="34"/>
    </location>
</feature>
<feature type="transmembrane region" description="Helical" evidence="6">
    <location>
        <begin position="35"/>
        <end position="49"/>
    </location>
</feature>
<feature type="topological domain" description="Extracellular" evidence="6">
    <location>
        <begin position="50"/>
        <end position="494"/>
    </location>
</feature>
<feature type="transmembrane region" description="Helical" evidence="6">
    <location>
        <begin position="495"/>
        <end position="515"/>
    </location>
</feature>
<feature type="topological domain" description="Cytoplasmic" evidence="6">
    <location>
        <begin position="516"/>
        <end position="521"/>
    </location>
</feature>
<feature type="transmembrane region" description="Helical" evidence="6">
    <location>
        <begin position="522"/>
        <end position="542"/>
    </location>
</feature>
<feature type="topological domain" description="Extracellular" evidence="6">
    <location>
        <begin position="543"/>
        <end position="555" status="greater than"/>
    </location>
</feature>
<feature type="region of interest" description="Fusion peptide" evidence="2">
    <location>
        <begin position="147"/>
        <end position="160"/>
    </location>
</feature>
<feature type="site" description="Cleavage; by host signal peptidase" evidence="4">
    <location>
        <begin position="49"/>
        <end position="50"/>
    </location>
</feature>
<feature type="site" description="Cleavage; by host signal peptidase" evidence="4">
    <location>
        <begin position="544"/>
        <end position="545"/>
    </location>
</feature>
<feature type="glycosylation site" description="N-linked (GlcNAc...) asparagine; by host" evidence="6">
    <location>
        <position position="116"/>
    </location>
</feature>
<feature type="glycosylation site" description="N-linked (GlcNAc...) asparagine; by host" evidence="6">
    <location>
        <position position="202"/>
    </location>
</feature>
<feature type="disulfide bond" evidence="3">
    <location>
        <begin position="52"/>
        <end position="79"/>
    </location>
</feature>
<feature type="disulfide bond" evidence="3">
    <location>
        <begin position="109"/>
        <end position="170"/>
    </location>
</feature>
<feature type="disulfide bond" evidence="3">
    <location>
        <begin position="123"/>
        <end position="154"/>
    </location>
</feature>
<feature type="disulfide bond" evidence="3">
    <location>
        <begin position="141"/>
        <end position="165"/>
    </location>
</feature>
<feature type="disulfide bond" evidence="3">
    <location>
        <begin position="234"/>
        <end position="334"/>
    </location>
</feature>
<feature type="disulfide bond" evidence="3">
    <location>
        <begin position="351"/>
        <end position="382"/>
    </location>
</feature>
<feature type="non-terminal residue">
    <location>
        <position position="1"/>
    </location>
</feature>
<feature type="non-terminal residue">
    <location>
        <position position="555"/>
    </location>
</feature>